<organism>
    <name type="scientific">Bacillus cereus (strain ATCC 10987 / NRS 248)</name>
    <dbReference type="NCBI Taxonomy" id="222523"/>
    <lineage>
        <taxon>Bacteria</taxon>
        <taxon>Bacillati</taxon>
        <taxon>Bacillota</taxon>
        <taxon>Bacilli</taxon>
        <taxon>Bacillales</taxon>
        <taxon>Bacillaceae</taxon>
        <taxon>Bacillus</taxon>
        <taxon>Bacillus cereus group</taxon>
    </lineage>
</organism>
<accession>Q73F82</accession>
<feature type="initiator methionine" description="Removed" evidence="1">
    <location>
        <position position="1"/>
    </location>
</feature>
<feature type="chain" id="PRO_0000126358" description="Small ribosomal subunit protein uS8">
    <location>
        <begin position="2"/>
        <end position="132"/>
    </location>
</feature>
<proteinExistence type="inferred from homology"/>
<comment type="function">
    <text evidence="2">One of the primary rRNA binding proteins, it binds directly to 16S rRNA central domain where it helps coordinate assembly of the platform of the 30S subunit.</text>
</comment>
<comment type="subunit">
    <text evidence="2">Part of the 30S ribosomal subunit. Contacts proteins S5 and S12.</text>
</comment>
<comment type="similarity">
    <text evidence="2">Belongs to the universal ribosomal protein uS8 family.</text>
</comment>
<sequence length="132" mass="14882">MVMTDPIADMLTRIRNANMVRHEKLEVPASKIKKEIAELLKREGFIRDVEYIEDNKQGILRIFLKYGANNERVITGLKRISKPGLRVYAKADEVPRVLNGLGIALVSTSKGVMTDKDARQLQTGGEVVAYVW</sequence>
<name>RS8_BACC1</name>
<protein>
    <recommendedName>
        <fullName evidence="2">Small ribosomal subunit protein uS8</fullName>
    </recommendedName>
    <alternativeName>
        <fullName evidence="3">30S ribosomal protein S8</fullName>
    </alternativeName>
</protein>
<gene>
    <name evidence="2" type="primary">rpsH</name>
    <name type="ordered locus">BCE_0124</name>
</gene>
<dbReference type="EMBL" id="AE017194">
    <property type="protein sequence ID" value="AAS39060.1"/>
    <property type="molecule type" value="Genomic_DNA"/>
</dbReference>
<dbReference type="SMR" id="Q73F82"/>
<dbReference type="KEGG" id="bca:BCE_0124"/>
<dbReference type="HOGENOM" id="CLU_098428_0_2_9"/>
<dbReference type="Proteomes" id="UP000002527">
    <property type="component" value="Chromosome"/>
</dbReference>
<dbReference type="GO" id="GO:1990904">
    <property type="term" value="C:ribonucleoprotein complex"/>
    <property type="evidence" value="ECO:0007669"/>
    <property type="project" value="UniProtKB-KW"/>
</dbReference>
<dbReference type="GO" id="GO:0005840">
    <property type="term" value="C:ribosome"/>
    <property type="evidence" value="ECO:0007669"/>
    <property type="project" value="UniProtKB-KW"/>
</dbReference>
<dbReference type="GO" id="GO:0019843">
    <property type="term" value="F:rRNA binding"/>
    <property type="evidence" value="ECO:0007669"/>
    <property type="project" value="UniProtKB-UniRule"/>
</dbReference>
<dbReference type="GO" id="GO:0003735">
    <property type="term" value="F:structural constituent of ribosome"/>
    <property type="evidence" value="ECO:0007669"/>
    <property type="project" value="InterPro"/>
</dbReference>
<dbReference type="GO" id="GO:0006412">
    <property type="term" value="P:translation"/>
    <property type="evidence" value="ECO:0007669"/>
    <property type="project" value="UniProtKB-UniRule"/>
</dbReference>
<dbReference type="FunFam" id="3.30.1370.30:FF:000002">
    <property type="entry name" value="30S ribosomal protein S8"/>
    <property type="match status" value="1"/>
</dbReference>
<dbReference type="FunFam" id="3.30.1490.10:FF:000001">
    <property type="entry name" value="30S ribosomal protein S8"/>
    <property type="match status" value="1"/>
</dbReference>
<dbReference type="Gene3D" id="3.30.1370.30">
    <property type="match status" value="1"/>
</dbReference>
<dbReference type="Gene3D" id="3.30.1490.10">
    <property type="match status" value="1"/>
</dbReference>
<dbReference type="HAMAP" id="MF_01302_B">
    <property type="entry name" value="Ribosomal_uS8_B"/>
    <property type="match status" value="1"/>
</dbReference>
<dbReference type="InterPro" id="IPR000630">
    <property type="entry name" value="Ribosomal_uS8"/>
</dbReference>
<dbReference type="InterPro" id="IPR047863">
    <property type="entry name" value="Ribosomal_uS8_CS"/>
</dbReference>
<dbReference type="InterPro" id="IPR035987">
    <property type="entry name" value="Ribosomal_uS8_sf"/>
</dbReference>
<dbReference type="NCBIfam" id="NF001109">
    <property type="entry name" value="PRK00136.1"/>
    <property type="match status" value="1"/>
</dbReference>
<dbReference type="PANTHER" id="PTHR11758">
    <property type="entry name" value="40S RIBOSOMAL PROTEIN S15A"/>
    <property type="match status" value="1"/>
</dbReference>
<dbReference type="Pfam" id="PF00410">
    <property type="entry name" value="Ribosomal_S8"/>
    <property type="match status" value="1"/>
</dbReference>
<dbReference type="SUPFAM" id="SSF56047">
    <property type="entry name" value="Ribosomal protein S8"/>
    <property type="match status" value="1"/>
</dbReference>
<dbReference type="PROSITE" id="PS00053">
    <property type="entry name" value="RIBOSOMAL_S8"/>
    <property type="match status" value="1"/>
</dbReference>
<reference key="1">
    <citation type="journal article" date="2004" name="Nucleic Acids Res.">
        <title>The genome sequence of Bacillus cereus ATCC 10987 reveals metabolic adaptations and a large plasmid related to Bacillus anthracis pXO1.</title>
        <authorList>
            <person name="Rasko D.A."/>
            <person name="Ravel J."/>
            <person name="Oekstad O.A."/>
            <person name="Helgason E."/>
            <person name="Cer R.Z."/>
            <person name="Jiang L."/>
            <person name="Shores K.A."/>
            <person name="Fouts D.E."/>
            <person name="Tourasse N.J."/>
            <person name="Angiuoli S.V."/>
            <person name="Kolonay J.F."/>
            <person name="Nelson W.C."/>
            <person name="Kolstoe A.-B."/>
            <person name="Fraser C.M."/>
            <person name="Read T.D."/>
        </authorList>
    </citation>
    <scope>NUCLEOTIDE SEQUENCE [LARGE SCALE GENOMIC DNA]</scope>
    <source>
        <strain>ATCC 10987 / NRS 248</strain>
    </source>
</reference>
<keyword id="KW-0687">Ribonucleoprotein</keyword>
<keyword id="KW-0689">Ribosomal protein</keyword>
<keyword id="KW-0694">RNA-binding</keyword>
<keyword id="KW-0699">rRNA-binding</keyword>
<evidence type="ECO:0000250" key="1"/>
<evidence type="ECO:0000255" key="2">
    <source>
        <dbReference type="HAMAP-Rule" id="MF_01302"/>
    </source>
</evidence>
<evidence type="ECO:0000305" key="3"/>